<evidence type="ECO:0000255" key="1">
    <source>
        <dbReference type="HAMAP-Rule" id="MF_01317"/>
    </source>
</evidence>
<reference key="1">
    <citation type="submission" date="2000-02" db="EMBL/GenBank/DDBJ databases">
        <title>Long branches in the seed plants and the root of the angiosperms.</title>
        <authorList>
            <person name="Graham S.W."/>
            <person name="Reeves P.A."/>
            <person name="Burns A."/>
            <person name="Olmstead R.G."/>
        </authorList>
    </citation>
    <scope>NUCLEOTIDE SEQUENCE [GENOMIC DNA]</scope>
</reference>
<organism>
    <name type="scientific">Lilium superbum</name>
    <name type="common">Turk's cap lily</name>
    <name type="synonym">Lilium canadense subsp. superbum</name>
    <dbReference type="NCBI Taxonomy" id="4692"/>
    <lineage>
        <taxon>Eukaryota</taxon>
        <taxon>Viridiplantae</taxon>
        <taxon>Streptophyta</taxon>
        <taxon>Embryophyta</taxon>
        <taxon>Tracheophyta</taxon>
        <taxon>Spermatophyta</taxon>
        <taxon>Magnoliopsida</taxon>
        <taxon>Liliopsida</taxon>
        <taxon>Liliales</taxon>
        <taxon>Liliaceae</taxon>
        <taxon>Lilium</taxon>
    </lineage>
</organism>
<comment type="function">
    <text evidence="1">One of the components of the core complex of photosystem II (PSII). PSII is a light-driven water:plastoquinone oxidoreductase that uses light energy to abstract electrons from H(2)O, generating O(2) and a proton gradient subsequently used for ATP formation. It consists of a core antenna complex that captures photons, and an electron transfer chain that converts photonic excitation into a charge separation. This subunit is found at the monomer-monomer interface and is required for correct PSII assembly and/or dimerization.</text>
</comment>
<comment type="subunit">
    <text evidence="1">PSII is composed of 1 copy each of membrane proteins PsbA, PsbB, PsbC, PsbD, PsbE, PsbF, PsbH, PsbI, PsbJ, PsbK, PsbL, PsbM, PsbT, PsbX, PsbY, PsbZ, Psb30/Ycf12, at least 3 peripheral proteins of the oxygen-evolving complex and a large number of cofactors. It forms dimeric complexes.</text>
</comment>
<comment type="subcellular location">
    <subcellularLocation>
        <location evidence="1">Plastid</location>
        <location evidence="1">Chloroplast thylakoid membrane</location>
        <topology evidence="1">Single-pass membrane protein</topology>
    </subcellularLocation>
</comment>
<comment type="similarity">
    <text evidence="1">Belongs to the PsbL family.</text>
</comment>
<geneLocation type="chloroplast"/>
<feature type="chain" id="PRO_0000219734" description="Photosystem II reaction center protein L">
    <location>
        <begin position="1"/>
        <end position="38"/>
    </location>
</feature>
<feature type="transmembrane region" description="Helical" evidence="1">
    <location>
        <begin position="17"/>
        <end position="37"/>
    </location>
</feature>
<dbReference type="EMBL" id="AY007480">
    <property type="protein sequence ID" value="AAG27004.1"/>
    <property type="molecule type" value="Genomic_DNA"/>
</dbReference>
<dbReference type="RefSeq" id="YP_009130228.1">
    <property type="nucleotide sequence ID" value="NC_026787.1"/>
</dbReference>
<dbReference type="SMR" id="Q7HIU7"/>
<dbReference type="GeneID" id="24020124"/>
<dbReference type="GO" id="GO:0009535">
    <property type="term" value="C:chloroplast thylakoid membrane"/>
    <property type="evidence" value="ECO:0007669"/>
    <property type="project" value="UniProtKB-SubCell"/>
</dbReference>
<dbReference type="GO" id="GO:0009539">
    <property type="term" value="C:photosystem II reaction center"/>
    <property type="evidence" value="ECO:0007669"/>
    <property type="project" value="InterPro"/>
</dbReference>
<dbReference type="GO" id="GO:0015979">
    <property type="term" value="P:photosynthesis"/>
    <property type="evidence" value="ECO:0007669"/>
    <property type="project" value="UniProtKB-UniRule"/>
</dbReference>
<dbReference type="HAMAP" id="MF_01317">
    <property type="entry name" value="PSII_PsbL"/>
    <property type="match status" value="1"/>
</dbReference>
<dbReference type="InterPro" id="IPR003372">
    <property type="entry name" value="PSII_PsbL"/>
</dbReference>
<dbReference type="InterPro" id="IPR037266">
    <property type="entry name" value="PSII_PsbL_sf"/>
</dbReference>
<dbReference type="NCBIfam" id="NF001972">
    <property type="entry name" value="PRK00753.1"/>
    <property type="match status" value="1"/>
</dbReference>
<dbReference type="Pfam" id="PF02419">
    <property type="entry name" value="PsbL"/>
    <property type="match status" value="1"/>
</dbReference>
<dbReference type="SUPFAM" id="SSF161017">
    <property type="entry name" value="Photosystem II reaction center protein L, PsbL"/>
    <property type="match status" value="1"/>
</dbReference>
<protein>
    <recommendedName>
        <fullName evidence="1">Photosystem II reaction center protein L</fullName>
        <shortName evidence="1">PSII-L</shortName>
    </recommendedName>
</protein>
<proteinExistence type="inferred from homology"/>
<accession>Q7HIU7</accession>
<keyword id="KW-0150">Chloroplast</keyword>
<keyword id="KW-0472">Membrane</keyword>
<keyword id="KW-0602">Photosynthesis</keyword>
<keyword id="KW-0604">Photosystem II</keyword>
<keyword id="KW-0934">Plastid</keyword>
<keyword id="KW-0674">Reaction center</keyword>
<keyword id="KW-0793">Thylakoid</keyword>
<keyword id="KW-0812">Transmembrane</keyword>
<keyword id="KW-1133">Transmembrane helix</keyword>
<gene>
    <name evidence="1" type="primary">psbL</name>
</gene>
<sequence>MTQSNPNEQNVELNRTSLYWGLLLIFVLAVLFSNYFFN</sequence>
<name>PSBL_LILSU</name>